<reference key="1">
    <citation type="journal article" date="2001" name="Lancet">
        <title>Whole genome sequencing of meticillin-resistant Staphylococcus aureus.</title>
        <authorList>
            <person name="Kuroda M."/>
            <person name="Ohta T."/>
            <person name="Uchiyama I."/>
            <person name="Baba T."/>
            <person name="Yuzawa H."/>
            <person name="Kobayashi I."/>
            <person name="Cui L."/>
            <person name="Oguchi A."/>
            <person name="Aoki K."/>
            <person name="Nagai Y."/>
            <person name="Lian J.-Q."/>
            <person name="Ito T."/>
            <person name="Kanamori M."/>
            <person name="Matsumaru H."/>
            <person name="Maruyama A."/>
            <person name="Murakami H."/>
            <person name="Hosoyama A."/>
            <person name="Mizutani-Ui Y."/>
            <person name="Takahashi N.K."/>
            <person name="Sawano T."/>
            <person name="Inoue R."/>
            <person name="Kaito C."/>
            <person name="Sekimizu K."/>
            <person name="Hirakawa H."/>
            <person name="Kuhara S."/>
            <person name="Goto S."/>
            <person name="Yabuzaki J."/>
            <person name="Kanehisa M."/>
            <person name="Yamashita A."/>
            <person name="Oshima K."/>
            <person name="Furuya K."/>
            <person name="Yoshino C."/>
            <person name="Shiba T."/>
            <person name="Hattori M."/>
            <person name="Ogasawara N."/>
            <person name="Hayashi H."/>
            <person name="Hiramatsu K."/>
        </authorList>
    </citation>
    <scope>NUCLEOTIDE SEQUENCE [LARGE SCALE GENOMIC DNA]</scope>
    <source>
        <strain>N315</strain>
    </source>
</reference>
<name>UPPP_STAAN</name>
<gene>
    <name evidence="1" type="primary">uppP</name>
    <name type="synonym">bacA</name>
    <name type="synonym">upk</name>
    <name type="ordered locus">SA0638</name>
</gene>
<evidence type="ECO:0000255" key="1">
    <source>
        <dbReference type="HAMAP-Rule" id="MF_01006"/>
    </source>
</evidence>
<dbReference type="EC" id="3.6.1.27" evidence="1"/>
<dbReference type="EMBL" id="BA000018">
    <property type="protein sequence ID" value="BAB41871.1"/>
    <property type="molecule type" value="Genomic_DNA"/>
</dbReference>
<dbReference type="PIR" id="D89839">
    <property type="entry name" value="D89839"/>
</dbReference>
<dbReference type="RefSeq" id="WP_000469894.1">
    <property type="nucleotide sequence ID" value="NC_002745.2"/>
</dbReference>
<dbReference type="SMR" id="P67391"/>
<dbReference type="EnsemblBacteria" id="BAB41871">
    <property type="protein sequence ID" value="BAB41871"/>
    <property type="gene ID" value="BAB41871"/>
</dbReference>
<dbReference type="KEGG" id="sau:SA0638"/>
<dbReference type="HOGENOM" id="CLU_060296_2_0_9"/>
<dbReference type="GO" id="GO:0005886">
    <property type="term" value="C:plasma membrane"/>
    <property type="evidence" value="ECO:0007669"/>
    <property type="project" value="UniProtKB-SubCell"/>
</dbReference>
<dbReference type="GO" id="GO:0050380">
    <property type="term" value="F:undecaprenyl-diphosphatase activity"/>
    <property type="evidence" value="ECO:0007669"/>
    <property type="project" value="UniProtKB-UniRule"/>
</dbReference>
<dbReference type="GO" id="GO:0071555">
    <property type="term" value="P:cell wall organization"/>
    <property type="evidence" value="ECO:0007669"/>
    <property type="project" value="UniProtKB-KW"/>
</dbReference>
<dbReference type="GO" id="GO:0009252">
    <property type="term" value="P:peptidoglycan biosynthetic process"/>
    <property type="evidence" value="ECO:0007669"/>
    <property type="project" value="UniProtKB-KW"/>
</dbReference>
<dbReference type="GO" id="GO:0008360">
    <property type="term" value="P:regulation of cell shape"/>
    <property type="evidence" value="ECO:0007669"/>
    <property type="project" value="UniProtKB-KW"/>
</dbReference>
<dbReference type="GO" id="GO:0046677">
    <property type="term" value="P:response to antibiotic"/>
    <property type="evidence" value="ECO:0007669"/>
    <property type="project" value="UniProtKB-UniRule"/>
</dbReference>
<dbReference type="HAMAP" id="MF_01006">
    <property type="entry name" value="Undec_diphosphatase"/>
    <property type="match status" value="1"/>
</dbReference>
<dbReference type="InterPro" id="IPR003824">
    <property type="entry name" value="UppP"/>
</dbReference>
<dbReference type="NCBIfam" id="NF001390">
    <property type="entry name" value="PRK00281.1-4"/>
    <property type="match status" value="1"/>
</dbReference>
<dbReference type="NCBIfam" id="TIGR00753">
    <property type="entry name" value="undec_PP_bacA"/>
    <property type="match status" value="1"/>
</dbReference>
<dbReference type="PANTHER" id="PTHR30622">
    <property type="entry name" value="UNDECAPRENYL-DIPHOSPHATASE"/>
    <property type="match status" value="1"/>
</dbReference>
<dbReference type="PANTHER" id="PTHR30622:SF3">
    <property type="entry name" value="UNDECAPRENYL-DIPHOSPHATASE"/>
    <property type="match status" value="1"/>
</dbReference>
<dbReference type="Pfam" id="PF02673">
    <property type="entry name" value="BacA"/>
    <property type="match status" value="1"/>
</dbReference>
<protein>
    <recommendedName>
        <fullName evidence="1">Undecaprenyl-diphosphatase</fullName>
        <ecNumber evidence="1">3.6.1.27</ecNumber>
    </recommendedName>
    <alternativeName>
        <fullName evidence="1">Bacitracin resistance protein</fullName>
    </alternativeName>
    <alternativeName>
        <fullName evidence="1">Undecaprenyl pyrophosphate phosphatase</fullName>
    </alternativeName>
</protein>
<accession>P67391</accession>
<accession>Q99VT8</accession>
<comment type="function">
    <text evidence="1">Catalyzes the dephosphorylation of undecaprenyl diphosphate (UPP). Confers resistance to bacitracin.</text>
</comment>
<comment type="catalytic activity">
    <reaction evidence="1">
        <text>di-trans,octa-cis-undecaprenyl diphosphate + H2O = di-trans,octa-cis-undecaprenyl phosphate + phosphate + H(+)</text>
        <dbReference type="Rhea" id="RHEA:28094"/>
        <dbReference type="ChEBI" id="CHEBI:15377"/>
        <dbReference type="ChEBI" id="CHEBI:15378"/>
        <dbReference type="ChEBI" id="CHEBI:43474"/>
        <dbReference type="ChEBI" id="CHEBI:58405"/>
        <dbReference type="ChEBI" id="CHEBI:60392"/>
        <dbReference type="EC" id="3.6.1.27"/>
    </reaction>
</comment>
<comment type="subcellular location">
    <subcellularLocation>
        <location evidence="1">Cell membrane</location>
        <topology evidence="1">Multi-pass membrane protein</topology>
    </subcellularLocation>
</comment>
<comment type="miscellaneous">
    <text>Bacitracin is thought to be involved in the inhibition of peptidoglycan synthesis by sequestering undecaprenyl diphosphate, thereby reducing the pool of lipid carrier available.</text>
</comment>
<comment type="similarity">
    <text evidence="1">Belongs to the UppP family.</text>
</comment>
<organism>
    <name type="scientific">Staphylococcus aureus (strain N315)</name>
    <dbReference type="NCBI Taxonomy" id="158879"/>
    <lineage>
        <taxon>Bacteria</taxon>
        <taxon>Bacillati</taxon>
        <taxon>Bacillota</taxon>
        <taxon>Bacilli</taxon>
        <taxon>Bacillales</taxon>
        <taxon>Staphylococcaceae</taxon>
        <taxon>Staphylococcus</taxon>
    </lineage>
</organism>
<proteinExistence type="inferred from homology"/>
<sequence length="291" mass="32339">MFIIELIKGIILGVVEGLTEFAPVSSTGHMILVDDMWLKSSEFLGSQSAFTFKIVIQLGSVFAAAWVFRERFLEILHIGKHKHVEGENDQQRRSKPRRLNLLHVLVGMVPAGILGLLFDDFIEEHLFSVPTVMIGLFVGAIYMIIADKYSVKVKNPQTVDQINYFQAFVIGISQAVAMWPGFSRSGSTISTGVLMKLNHKAASDFTFIMAVPIMLAASGLSLLKHYQDIQIADIPFYILGFLAAFTVGLIAIKTFLHLINKIKLIPFAIYRIVLVIFIAILYFGFGIGKGI</sequence>
<keyword id="KW-0046">Antibiotic resistance</keyword>
<keyword id="KW-1003">Cell membrane</keyword>
<keyword id="KW-0133">Cell shape</keyword>
<keyword id="KW-0961">Cell wall biogenesis/degradation</keyword>
<keyword id="KW-0378">Hydrolase</keyword>
<keyword id="KW-0472">Membrane</keyword>
<keyword id="KW-0573">Peptidoglycan synthesis</keyword>
<keyword id="KW-0812">Transmembrane</keyword>
<keyword id="KW-1133">Transmembrane helix</keyword>
<feature type="chain" id="PRO_0000151200" description="Undecaprenyl-diphosphatase">
    <location>
        <begin position="1"/>
        <end position="291"/>
    </location>
</feature>
<feature type="transmembrane region" description="Helical" evidence="1">
    <location>
        <begin position="1"/>
        <end position="21"/>
    </location>
</feature>
<feature type="transmembrane region" description="Helical" evidence="1">
    <location>
        <begin position="48"/>
        <end position="68"/>
    </location>
</feature>
<feature type="transmembrane region" description="Helical" evidence="1">
    <location>
        <begin position="102"/>
        <end position="122"/>
    </location>
</feature>
<feature type="transmembrane region" description="Helical" evidence="1">
    <location>
        <begin position="126"/>
        <end position="146"/>
    </location>
</feature>
<feature type="transmembrane region" description="Helical" evidence="1">
    <location>
        <begin position="162"/>
        <end position="182"/>
    </location>
</feature>
<feature type="transmembrane region" description="Helical" evidence="1">
    <location>
        <begin position="203"/>
        <end position="223"/>
    </location>
</feature>
<feature type="transmembrane region" description="Helical" evidence="1">
    <location>
        <begin position="231"/>
        <end position="251"/>
    </location>
</feature>
<feature type="transmembrane region" description="Helical" evidence="1">
    <location>
        <begin position="267"/>
        <end position="287"/>
    </location>
</feature>